<name>MASZ_CORGL</name>
<accession>P42450</accession>
<dbReference type="EC" id="2.3.3.9" evidence="1"/>
<dbReference type="EMBL" id="X78491">
    <property type="protein sequence ID" value="CAA55243.1"/>
    <property type="molecule type" value="Genomic_DNA"/>
</dbReference>
<dbReference type="EMBL" id="L27123">
    <property type="protein sequence ID" value="AAA68074.1"/>
    <property type="molecule type" value="Genomic_DNA"/>
</dbReference>
<dbReference type="EMBL" id="BA000036">
    <property type="protein sequence ID" value="BAB99722.1"/>
    <property type="molecule type" value="Genomic_DNA"/>
</dbReference>
<dbReference type="EMBL" id="BX927154">
    <property type="protein sequence ID" value="CAF20673.1"/>
    <property type="molecule type" value="Genomic_DNA"/>
</dbReference>
<dbReference type="PIR" id="I40715">
    <property type="entry name" value="I40715"/>
</dbReference>
<dbReference type="RefSeq" id="NP_601530.1">
    <property type="nucleotide sequence ID" value="NC_003450.3"/>
</dbReference>
<dbReference type="RefSeq" id="WP_011015044.1">
    <property type="nucleotide sequence ID" value="NC_006958.1"/>
</dbReference>
<dbReference type="SMR" id="P42450"/>
<dbReference type="STRING" id="196627.cg2559"/>
<dbReference type="GeneID" id="1020280"/>
<dbReference type="KEGG" id="cgb:cg2559"/>
<dbReference type="KEGG" id="cgl:Cgl2329"/>
<dbReference type="PATRIC" id="fig|196627.13.peg.2263"/>
<dbReference type="eggNOG" id="COG2225">
    <property type="taxonomic scope" value="Bacteria"/>
</dbReference>
<dbReference type="HOGENOM" id="CLU_028446_1_0_11"/>
<dbReference type="OrthoDB" id="9762054at2"/>
<dbReference type="BioCyc" id="CORYNE:G18NG-11926-MONOMER"/>
<dbReference type="BRENDA" id="2.3.3.9">
    <property type="organism ID" value="960"/>
</dbReference>
<dbReference type="UniPathway" id="UPA00703">
    <property type="reaction ID" value="UER00720"/>
</dbReference>
<dbReference type="Proteomes" id="UP000000582">
    <property type="component" value="Chromosome"/>
</dbReference>
<dbReference type="Proteomes" id="UP000001009">
    <property type="component" value="Chromosome"/>
</dbReference>
<dbReference type="GO" id="GO:0005829">
    <property type="term" value="C:cytosol"/>
    <property type="evidence" value="ECO:0007669"/>
    <property type="project" value="TreeGrafter"/>
</dbReference>
<dbReference type="GO" id="GO:0000287">
    <property type="term" value="F:magnesium ion binding"/>
    <property type="evidence" value="ECO:0007669"/>
    <property type="project" value="TreeGrafter"/>
</dbReference>
<dbReference type="GO" id="GO:0004474">
    <property type="term" value="F:malate synthase activity"/>
    <property type="evidence" value="ECO:0007669"/>
    <property type="project" value="UniProtKB-UniRule"/>
</dbReference>
<dbReference type="GO" id="GO:0009436">
    <property type="term" value="P:glyoxylate catabolic process"/>
    <property type="evidence" value="ECO:0007669"/>
    <property type="project" value="TreeGrafter"/>
</dbReference>
<dbReference type="GO" id="GO:0006097">
    <property type="term" value="P:glyoxylate cycle"/>
    <property type="evidence" value="ECO:0007669"/>
    <property type="project" value="UniProtKB-UniRule"/>
</dbReference>
<dbReference type="GO" id="GO:0006099">
    <property type="term" value="P:tricarboxylic acid cycle"/>
    <property type="evidence" value="ECO:0007669"/>
    <property type="project" value="UniProtKB-KW"/>
</dbReference>
<dbReference type="Gene3D" id="3.20.20.360">
    <property type="entry name" value="Malate synthase, domain 3"/>
    <property type="match status" value="2"/>
</dbReference>
<dbReference type="Gene3D" id="1.20.1220.12">
    <property type="entry name" value="Malate synthase, domain III"/>
    <property type="match status" value="1"/>
</dbReference>
<dbReference type="HAMAP" id="MF_00641">
    <property type="entry name" value="Malate_synth_G"/>
    <property type="match status" value="1"/>
</dbReference>
<dbReference type="InterPro" id="IPR044856">
    <property type="entry name" value="Malate_synth_C_sf"/>
</dbReference>
<dbReference type="InterPro" id="IPR011076">
    <property type="entry name" value="Malate_synth_sf"/>
</dbReference>
<dbReference type="InterPro" id="IPR001465">
    <property type="entry name" value="Malate_synthase_TIM"/>
</dbReference>
<dbReference type="InterPro" id="IPR006253">
    <property type="entry name" value="Malate_synthG"/>
</dbReference>
<dbReference type="InterPro" id="IPR048355">
    <property type="entry name" value="MS_C"/>
</dbReference>
<dbReference type="InterPro" id="IPR048356">
    <property type="entry name" value="MS_N"/>
</dbReference>
<dbReference type="InterPro" id="IPR046363">
    <property type="entry name" value="MS_N_TIM-barrel_dom"/>
</dbReference>
<dbReference type="InterPro" id="IPR048357">
    <property type="entry name" value="MSG_insertion"/>
</dbReference>
<dbReference type="NCBIfam" id="TIGR01345">
    <property type="entry name" value="malate_syn_G"/>
    <property type="match status" value="1"/>
</dbReference>
<dbReference type="NCBIfam" id="NF002825">
    <property type="entry name" value="PRK02999.1"/>
    <property type="match status" value="1"/>
</dbReference>
<dbReference type="PANTHER" id="PTHR42739">
    <property type="entry name" value="MALATE SYNTHASE G"/>
    <property type="match status" value="1"/>
</dbReference>
<dbReference type="PANTHER" id="PTHR42739:SF1">
    <property type="entry name" value="MALATE SYNTHASE G"/>
    <property type="match status" value="1"/>
</dbReference>
<dbReference type="Pfam" id="PF20659">
    <property type="entry name" value="MS_C"/>
    <property type="match status" value="1"/>
</dbReference>
<dbReference type="Pfam" id="PF20656">
    <property type="entry name" value="MS_N"/>
    <property type="match status" value="1"/>
</dbReference>
<dbReference type="Pfam" id="PF01274">
    <property type="entry name" value="MS_TIM-barrel"/>
    <property type="match status" value="1"/>
</dbReference>
<dbReference type="Pfam" id="PF20658">
    <property type="entry name" value="MSG_insertion"/>
    <property type="match status" value="1"/>
</dbReference>
<dbReference type="SUPFAM" id="SSF51645">
    <property type="entry name" value="Malate synthase G"/>
    <property type="match status" value="1"/>
</dbReference>
<keyword id="KW-0963">Cytoplasm</keyword>
<keyword id="KW-0903">Direct protein sequencing</keyword>
<keyword id="KW-0329">Glyoxylate bypass</keyword>
<keyword id="KW-0460">Magnesium</keyword>
<keyword id="KW-0479">Metal-binding</keyword>
<keyword id="KW-0558">Oxidation</keyword>
<keyword id="KW-1185">Reference proteome</keyword>
<keyword id="KW-0808">Transferase</keyword>
<keyword id="KW-0816">Tricarboxylic acid cycle</keyword>
<feature type="initiator methionine" description="Removed" evidence="5">
    <location>
        <position position="1"/>
    </location>
</feature>
<feature type="chain" id="PRO_0000166885" description="Malate synthase G">
    <location>
        <begin position="2"/>
        <end position="739"/>
    </location>
</feature>
<feature type="region of interest" description="Disordered" evidence="2">
    <location>
        <begin position="1"/>
        <end position="23"/>
    </location>
</feature>
<feature type="compositionally biased region" description="Polar residues" evidence="2">
    <location>
        <begin position="1"/>
        <end position="18"/>
    </location>
</feature>
<feature type="active site" description="Proton acceptor" evidence="1">
    <location>
        <position position="356"/>
    </location>
</feature>
<feature type="active site" description="Proton donor" evidence="1">
    <location>
        <position position="647"/>
    </location>
</feature>
<feature type="binding site" evidence="1">
    <location>
        <position position="135"/>
    </location>
    <ligand>
        <name>acetyl-CoA</name>
        <dbReference type="ChEBI" id="CHEBI:57288"/>
    </ligand>
</feature>
<feature type="binding site" evidence="1">
    <location>
        <begin position="142"/>
        <end position="143"/>
    </location>
    <ligand>
        <name>acetyl-CoA</name>
        <dbReference type="ChEBI" id="CHEBI:57288"/>
    </ligand>
</feature>
<feature type="binding site" evidence="1">
    <location>
        <position position="292"/>
    </location>
    <ligand>
        <name>acetyl-CoA</name>
        <dbReference type="ChEBI" id="CHEBI:57288"/>
    </ligand>
</feature>
<feature type="binding site" evidence="1">
    <location>
        <position position="329"/>
    </location>
    <ligand>
        <name>acetyl-CoA</name>
        <dbReference type="ChEBI" id="CHEBI:57288"/>
    </ligand>
</feature>
<feature type="binding site" evidence="1">
    <location>
        <position position="356"/>
    </location>
    <ligand>
        <name>glyoxylate</name>
        <dbReference type="ChEBI" id="CHEBI:36655"/>
    </ligand>
</feature>
<feature type="binding site" evidence="1">
    <location>
        <position position="447"/>
    </location>
    <ligand>
        <name>glyoxylate</name>
        <dbReference type="ChEBI" id="CHEBI:36655"/>
    </ligand>
</feature>
<feature type="binding site" evidence="1">
    <location>
        <position position="447"/>
    </location>
    <ligand>
        <name>Mg(2+)</name>
        <dbReference type="ChEBI" id="CHEBI:18420"/>
    </ligand>
</feature>
<feature type="binding site" evidence="1">
    <location>
        <begin position="472"/>
        <end position="475"/>
    </location>
    <ligand>
        <name>glyoxylate</name>
        <dbReference type="ChEBI" id="CHEBI:36655"/>
    </ligand>
</feature>
<feature type="binding site" evidence="1">
    <location>
        <position position="475"/>
    </location>
    <ligand>
        <name>Mg(2+)</name>
        <dbReference type="ChEBI" id="CHEBI:18420"/>
    </ligand>
</feature>
<feature type="binding site" evidence="1">
    <location>
        <position position="556"/>
    </location>
    <ligand>
        <name>acetyl-CoA</name>
        <dbReference type="ChEBI" id="CHEBI:57288"/>
    </ligand>
</feature>
<feature type="modified residue" description="Cysteine sulfenic acid (-SOH)" evidence="1">
    <location>
        <position position="633"/>
    </location>
</feature>
<gene>
    <name evidence="1" type="primary">glcB</name>
    <name type="synonym">aceB</name>
    <name type="ordered locus">Cgl2329</name>
    <name type="ordered locus">cg2559</name>
</gene>
<comment type="function">
    <text evidence="1 5">Involved in the glycolate utilization. Catalyzes the condensation and subsequent hydrolysis of acetyl-coenzyme A (acetyl-CoA) and glyoxylate to form malate and CoA.</text>
</comment>
<comment type="catalytic activity">
    <reaction evidence="1 5">
        <text>glyoxylate + acetyl-CoA + H2O = (S)-malate + CoA + H(+)</text>
        <dbReference type="Rhea" id="RHEA:18181"/>
        <dbReference type="ChEBI" id="CHEBI:15377"/>
        <dbReference type="ChEBI" id="CHEBI:15378"/>
        <dbReference type="ChEBI" id="CHEBI:15589"/>
        <dbReference type="ChEBI" id="CHEBI:36655"/>
        <dbReference type="ChEBI" id="CHEBI:57287"/>
        <dbReference type="ChEBI" id="CHEBI:57288"/>
        <dbReference type="EC" id="2.3.3.9"/>
    </reaction>
</comment>
<comment type="cofactor">
    <cofactor evidence="1 5">
        <name>Mg(2+)</name>
        <dbReference type="ChEBI" id="CHEBI:18420"/>
    </cofactor>
    <text evidence="1 5">Mg(2+). Co(2+) or Mn(2+) could partially replace magnesium.</text>
</comment>
<comment type="activity regulation">
    <text evidence="5">Inhibited by oxalate, glycolate and ATP.</text>
</comment>
<comment type="biophysicochemical properties">
    <kinetics>
        <KM evidence="5">12 uM for acetyl-CoA (at pH 7.6 and 30 degrees Celsius)</KM>
        <KM evidence="5">30 uM for glyoxylate (at pH 7.6 and 30 degrees Celsius)</KM>
    </kinetics>
    <phDependence>
        <text evidence="5">Optimum pH is 7.6.</text>
    </phDependence>
    <temperatureDependence>
        <text evidence="5">Optimum temperature is 43 degrees Celsius.</text>
    </temperatureDependence>
</comment>
<comment type="pathway">
    <text evidence="1">Carbohydrate metabolism; glyoxylate cycle; (S)-malate from isocitrate: step 2/2.</text>
</comment>
<comment type="subunit">
    <text evidence="1 5">Monomer.</text>
</comment>
<comment type="subcellular location">
    <subcellularLocation>
        <location evidence="1 5">Cytoplasm</location>
    </subcellularLocation>
</comment>
<comment type="induction">
    <text evidence="3 4">Activated by RamA and repressed by RamB.</text>
</comment>
<comment type="disruption phenotype">
    <text evidence="5">Cells lacking this gene show the absence of malate synthase activity and to the inability to grow on acetate.</text>
</comment>
<comment type="similarity">
    <text evidence="1">Belongs to the malate synthase family. GlcB subfamily.</text>
</comment>
<proteinExistence type="evidence at protein level"/>
<organism>
    <name type="scientific">Corynebacterium glutamicum (strain ATCC 13032 / DSM 20300 / JCM 1318 / BCRC 11384 / CCUG 27702 / LMG 3730 / NBRC 12168 / NCIMB 10025 / NRRL B-2784 / 534)</name>
    <dbReference type="NCBI Taxonomy" id="196627"/>
    <lineage>
        <taxon>Bacteria</taxon>
        <taxon>Bacillati</taxon>
        <taxon>Actinomycetota</taxon>
        <taxon>Actinomycetes</taxon>
        <taxon>Mycobacteriales</taxon>
        <taxon>Corynebacteriaceae</taxon>
        <taxon>Corynebacterium</taxon>
    </lineage>
</organism>
<protein>
    <recommendedName>
        <fullName evidence="1">Malate synthase G</fullName>
        <ecNumber evidence="1">2.3.3.9</ecNumber>
    </recommendedName>
</protein>
<sequence length="739" mass="82363">MTEQELLSAQTADNAGTDSTERVDAGGMQVAKVLYDFVTEAVLPRVGVDAEKFWSGFAAIARDLTPRNRELLARRDELQMLIDDYHRNNSGTIDQEAYEDFLKEIGYLVEEPEAAEIRTQNVDTEISSTAGPQLVVPILNARFALNAANARWGSLYDALYGTNAIPETDGAEKGKEYNPVRGQKVIEWGREFLDSVVPLDGASHADVEKYNITDGKLAAHIGDSVYRLKNRESYRGFTGNFLDPEAILLETNGLHIELQIDPVHPIGKADKTGLKDIVLESAITTIMDFEDSVAAVDAEDKTLGYSNWFGLNTGELKEEMSKNGRIFTRELNKDRVYIGRNGTELVLHGRSLLFVRNVGHLMQNPSILIDGEEIFEGIMDAVLTTVCAIPGIAPQNKMRNSRKGSIYIVKPKQHGPEEVAFTNELFGRVEDLLDLPRHTLKVGVMDEERRTSVNLDASIMEVADRLAFINTGFLDRTGDEIHTSMEAGAMVRKADMQTAPWKQAYENNNVDAGIQRGLPGKAQIGKGMWAMTELMAEMLEKKIGQPREGANTAWVPSPTGATLHATHYHLVDVFKVQDELRAAGRRDSLRNILTIPTAPNTNWSEEEKKEEMDNNCQSILGYVVRWVEHGVGCSKVPDIHDIDLMEDRATLRISSQMLANWIRHDVVSKEQVLESLERMAVVVDKQNAGDEAYRDMAPNYDASLAFQAAKDLIFEGTKSPSGYTEPILHARRREFKAKN</sequence>
<reference key="1">
    <citation type="journal article" date="1994" name="Microbiology">
        <title>Malate synthase from Corynebacterium glutamicum: sequence analysis of the gene and biochemical characterization of the enzyme.</title>
        <authorList>
            <person name="Reinscheid D.J."/>
            <person name="Eikmanns B.J."/>
            <person name="Sahm H."/>
        </authorList>
    </citation>
    <scope>NUCLEOTIDE SEQUENCE [GENOMIC DNA]</scope>
    <scope>PROTEIN SEQUENCE OF 2-11</scope>
    <scope>FUNCTION</scope>
    <scope>CATALYTIC ACTIVITY</scope>
    <scope>DISRUPTION PHENOTYPE</scope>
    <scope>SUBCELLULAR LOCATION</scope>
    <scope>BIOPHYSICOCHEMICAL PROPERTIES</scope>
    <scope>ACTIVITY REGULATION</scope>
    <scope>COFACTOR</scope>
    <scope>SUBUNIT</scope>
    <source>
        <strain>ATCC 13032 / DSM 20300 / JCM 1318 / BCRC 11384 / CCUG 27702 / LMG 3730 / NBRC 12168 / NCIMB 10025 / NRRL B-2784 / 534</strain>
    </source>
</reference>
<reference key="2">
    <citation type="journal article" date="1994" name="J. Microbiol. Biotechnol.">
        <title>Molecular characterization of aceB, a gene encoding malate synthase in Corynebacterium glutamicum.</title>
        <authorList>
            <person name="Lee H.S."/>
            <person name="Sinskey A.J."/>
        </authorList>
    </citation>
    <scope>NUCLEOTIDE SEQUENCE [GENOMIC DNA]</scope>
    <source>
        <strain>ATCC 13059 / LMG 3658 / NCIB 10332 / AS019 / 613</strain>
    </source>
</reference>
<reference key="3">
    <citation type="journal article" date="2003" name="Appl. Microbiol. Biotechnol.">
        <title>The Corynebacterium glutamicum genome: features and impacts on biotechnological processes.</title>
        <authorList>
            <person name="Ikeda M."/>
            <person name="Nakagawa S."/>
        </authorList>
    </citation>
    <scope>NUCLEOTIDE SEQUENCE [LARGE SCALE GENOMIC DNA]</scope>
    <source>
        <strain>ATCC 13032 / DSM 20300 / JCM 1318 / BCRC 11384 / CCUG 27702 / LMG 3730 / NBRC 12168 / NCIMB 10025 / NRRL B-2784 / 534</strain>
    </source>
</reference>
<reference key="4">
    <citation type="journal article" date="2003" name="J. Biotechnol.">
        <title>The complete Corynebacterium glutamicum ATCC 13032 genome sequence and its impact on the production of L-aspartate-derived amino acids and vitamins.</title>
        <authorList>
            <person name="Kalinowski J."/>
            <person name="Bathe B."/>
            <person name="Bartels D."/>
            <person name="Bischoff N."/>
            <person name="Bott M."/>
            <person name="Burkovski A."/>
            <person name="Dusch N."/>
            <person name="Eggeling L."/>
            <person name="Eikmanns B.J."/>
            <person name="Gaigalat L."/>
            <person name="Goesmann A."/>
            <person name="Hartmann M."/>
            <person name="Huthmacher K."/>
            <person name="Kraemer R."/>
            <person name="Linke B."/>
            <person name="McHardy A.C."/>
            <person name="Meyer F."/>
            <person name="Moeckel B."/>
            <person name="Pfefferle W."/>
            <person name="Puehler A."/>
            <person name="Rey D.A."/>
            <person name="Rueckert C."/>
            <person name="Rupp O."/>
            <person name="Sahm H."/>
            <person name="Wendisch V.F."/>
            <person name="Wiegraebe I."/>
            <person name="Tauch A."/>
        </authorList>
    </citation>
    <scope>NUCLEOTIDE SEQUENCE [LARGE SCALE GENOMIC DNA]</scope>
    <source>
        <strain>ATCC 13032 / DSM 20300 / JCM 1318 / BCRC 11384 / CCUG 27702 / LMG 3730 / NBRC 12168 / NCIMB 10025 / NRRL B-2784 / 534</strain>
    </source>
</reference>
<reference key="5">
    <citation type="journal article" date="2004" name="J. Bacteriol.">
        <title>RamB, a novel transcriptional regulator of genes involved in acetate metabolism of Corynebacterium glutamicum.</title>
        <authorList>
            <person name="Gerstmeir R."/>
            <person name="Cramer A."/>
            <person name="Dangel P."/>
            <person name="Schaffer S."/>
            <person name="Eikmanns B.J."/>
        </authorList>
    </citation>
    <scope>INDUCTION</scope>
    <source>
        <strain>ATCC 13032 / DSM 20300 / JCM 1318 / BCRC 11384 / CCUG 27702 / LMG 3730 / NBRC 12168 / NCIMB 10025 / NRRL B-2784 / 534</strain>
    </source>
</reference>
<reference key="6">
    <citation type="journal article" date="2006" name="J. Bacteriol.">
        <title>Identification of RamA, a novel LuxR-type transcriptional regulator of genes involved in acetate metabolism of Corynebacterium glutamicum.</title>
        <authorList>
            <person name="Cramer A."/>
            <person name="Gerstmeir R."/>
            <person name="Schaffer S."/>
            <person name="Bott M."/>
            <person name="Eikmanns B.J."/>
        </authorList>
    </citation>
    <scope>INDUCTION</scope>
    <source>
        <strain>ATCC 13032 / DSM 20300 / JCM 1318 / BCRC 11384 / CCUG 27702 / LMG 3730 / NBRC 12168 / NCIMB 10025 / NRRL B-2784 / 534</strain>
    </source>
</reference>
<evidence type="ECO:0000255" key="1">
    <source>
        <dbReference type="HAMAP-Rule" id="MF_00641"/>
    </source>
</evidence>
<evidence type="ECO:0000256" key="2">
    <source>
        <dbReference type="SAM" id="MobiDB-lite"/>
    </source>
</evidence>
<evidence type="ECO:0000269" key="3">
    <source>
    </source>
</evidence>
<evidence type="ECO:0000269" key="4">
    <source>
    </source>
</evidence>
<evidence type="ECO:0000269" key="5">
    <source>
    </source>
</evidence>